<proteinExistence type="evidence at transcript level"/>
<reference key="1">
    <citation type="journal article" date="1993" name="Eur. J. Biochem.">
        <title>Isolation and characterization of three cDNAs coding for Rab proteins from the albumen gland of the mollusc Lymnaea stagnalis.</title>
        <authorList>
            <person name="Agterberg M."/>
            <person name="van Die I."/>
            <person name="Yang H."/>
            <person name="Andriessen J.A."/>
            <person name="van Tetering A."/>
            <person name="van den Eijnden D.H."/>
            <person name="Ploegh H.L."/>
        </authorList>
    </citation>
    <scope>NUCLEOTIDE SEQUENCE [MRNA]</scope>
</reference>
<accession>Q05975</accession>
<organism>
    <name type="scientific">Lymnaea stagnalis</name>
    <name type="common">Great pond snail</name>
    <name type="synonym">Helix stagnalis</name>
    <dbReference type="NCBI Taxonomy" id="6523"/>
    <lineage>
        <taxon>Eukaryota</taxon>
        <taxon>Metazoa</taxon>
        <taxon>Spiralia</taxon>
        <taxon>Lophotrochozoa</taxon>
        <taxon>Mollusca</taxon>
        <taxon>Gastropoda</taxon>
        <taxon>Heterobranchia</taxon>
        <taxon>Euthyneura</taxon>
        <taxon>Panpulmonata</taxon>
        <taxon>Hygrophila</taxon>
        <taxon>Lymnaeoidea</taxon>
        <taxon>Lymnaeidae</taxon>
        <taxon>Lymnaea</taxon>
    </lineage>
</organism>
<sequence>MSYAYLFKYIIIGDTGVGKSCLLLQFTDKRFQPVHDLTIGVEFGARMITIDGKQIKLQIWDTAGQESFRSITRSYYRGAAGALLVYDITRRDTFNHLTTWLEDARQHSNSNMVIMLIGNKSDLEARREVKKEEGEAFAREHGLIFMETSAKTAANVEEAFINTAKEIYQKIQDGVFDINNEANGIKIGPQHSPASQSLNVGGSGGNQGGNCC</sequence>
<evidence type="ECO:0000250" key="1"/>
<evidence type="ECO:0000250" key="2">
    <source>
        <dbReference type="UniProtKB" id="P61019"/>
    </source>
</evidence>
<evidence type="ECO:0000250" key="3">
    <source>
        <dbReference type="UniProtKB" id="P62820"/>
    </source>
</evidence>
<evidence type="ECO:0000256" key="4">
    <source>
        <dbReference type="SAM" id="MobiDB-lite"/>
    </source>
</evidence>
<evidence type="ECO:0000305" key="5"/>
<dbReference type="EMBL" id="X72689">
    <property type="protein sequence ID" value="CAA51234.1"/>
    <property type="molecule type" value="mRNA"/>
</dbReference>
<dbReference type="PIR" id="S38341">
    <property type="entry name" value="S38341"/>
</dbReference>
<dbReference type="SMR" id="Q05975"/>
<dbReference type="GO" id="GO:0005789">
    <property type="term" value="C:endoplasmic reticulum membrane"/>
    <property type="evidence" value="ECO:0007669"/>
    <property type="project" value="UniProtKB-SubCell"/>
</dbReference>
<dbReference type="GO" id="GO:0033116">
    <property type="term" value="C:endoplasmic reticulum-Golgi intermediate compartment membrane"/>
    <property type="evidence" value="ECO:0007669"/>
    <property type="project" value="UniProtKB-SubCell"/>
</dbReference>
<dbReference type="GO" id="GO:0000139">
    <property type="term" value="C:Golgi membrane"/>
    <property type="evidence" value="ECO:0007669"/>
    <property type="project" value="UniProtKB-SubCell"/>
</dbReference>
<dbReference type="GO" id="GO:0005525">
    <property type="term" value="F:GTP binding"/>
    <property type="evidence" value="ECO:0007669"/>
    <property type="project" value="UniProtKB-KW"/>
</dbReference>
<dbReference type="GO" id="GO:0003924">
    <property type="term" value="F:GTPase activity"/>
    <property type="evidence" value="ECO:0007669"/>
    <property type="project" value="InterPro"/>
</dbReference>
<dbReference type="GO" id="GO:0015031">
    <property type="term" value="P:protein transport"/>
    <property type="evidence" value="ECO:0007669"/>
    <property type="project" value="UniProtKB-KW"/>
</dbReference>
<dbReference type="GO" id="GO:0016192">
    <property type="term" value="P:vesicle-mediated transport"/>
    <property type="evidence" value="ECO:0007669"/>
    <property type="project" value="UniProtKB-KW"/>
</dbReference>
<dbReference type="CDD" id="cd01866">
    <property type="entry name" value="Rab2"/>
    <property type="match status" value="1"/>
</dbReference>
<dbReference type="FunFam" id="3.40.50.300:FF:000275">
    <property type="entry name" value="Putative ras-related protein Rab-2A"/>
    <property type="match status" value="1"/>
</dbReference>
<dbReference type="Gene3D" id="3.40.50.300">
    <property type="entry name" value="P-loop containing nucleotide triphosphate hydrolases"/>
    <property type="match status" value="1"/>
</dbReference>
<dbReference type="InterPro" id="IPR027417">
    <property type="entry name" value="P-loop_NTPase"/>
</dbReference>
<dbReference type="InterPro" id="IPR050209">
    <property type="entry name" value="Rab_GTPases_membrane_traffic"/>
</dbReference>
<dbReference type="InterPro" id="IPR005225">
    <property type="entry name" value="Small_GTP-bd"/>
</dbReference>
<dbReference type="InterPro" id="IPR001806">
    <property type="entry name" value="Small_GTPase"/>
</dbReference>
<dbReference type="NCBIfam" id="TIGR00231">
    <property type="entry name" value="small_GTP"/>
    <property type="match status" value="1"/>
</dbReference>
<dbReference type="PANTHER" id="PTHR47979">
    <property type="entry name" value="DRAB11-RELATED"/>
    <property type="match status" value="1"/>
</dbReference>
<dbReference type="Pfam" id="PF00071">
    <property type="entry name" value="Ras"/>
    <property type="match status" value="1"/>
</dbReference>
<dbReference type="PRINTS" id="PR00449">
    <property type="entry name" value="RASTRNSFRMNG"/>
</dbReference>
<dbReference type="SMART" id="SM00175">
    <property type="entry name" value="RAB"/>
    <property type="match status" value="1"/>
</dbReference>
<dbReference type="SMART" id="SM00176">
    <property type="entry name" value="RAN"/>
    <property type="match status" value="1"/>
</dbReference>
<dbReference type="SMART" id="SM00173">
    <property type="entry name" value="RAS"/>
    <property type="match status" value="1"/>
</dbReference>
<dbReference type="SMART" id="SM00174">
    <property type="entry name" value="RHO"/>
    <property type="match status" value="1"/>
</dbReference>
<dbReference type="SUPFAM" id="SSF52540">
    <property type="entry name" value="P-loop containing nucleoside triphosphate hydrolases"/>
    <property type="match status" value="1"/>
</dbReference>
<dbReference type="PROSITE" id="PS51419">
    <property type="entry name" value="RAB"/>
    <property type="match status" value="1"/>
</dbReference>
<protein>
    <recommendedName>
        <fullName>Ras-related protein Rab-2</fullName>
    </recommendedName>
</protein>
<keyword id="KW-0256">Endoplasmic reticulum</keyword>
<keyword id="KW-0931">ER-Golgi transport</keyword>
<keyword id="KW-0333">Golgi apparatus</keyword>
<keyword id="KW-0342">GTP-binding</keyword>
<keyword id="KW-0449">Lipoprotein</keyword>
<keyword id="KW-0472">Membrane</keyword>
<keyword id="KW-0547">Nucleotide-binding</keyword>
<keyword id="KW-0636">Prenylation</keyword>
<keyword id="KW-0653">Protein transport</keyword>
<keyword id="KW-0813">Transport</keyword>
<gene>
    <name type="primary">RAB2</name>
</gene>
<feature type="chain" id="PRO_0000121070" description="Ras-related protein Rab-2">
    <location>
        <begin position="1"/>
        <end position="212"/>
    </location>
</feature>
<feature type="region of interest" description="Disordered" evidence="4">
    <location>
        <begin position="188"/>
        <end position="212"/>
    </location>
</feature>
<feature type="short sequence motif" description="Effector region" evidence="1">
    <location>
        <begin position="35"/>
        <end position="43"/>
    </location>
</feature>
<feature type="compositionally biased region" description="Gly residues" evidence="4">
    <location>
        <begin position="201"/>
        <end position="212"/>
    </location>
</feature>
<feature type="binding site" evidence="2">
    <location>
        <begin position="13"/>
        <end position="21"/>
    </location>
    <ligand>
        <name>GTP</name>
        <dbReference type="ChEBI" id="CHEBI:37565"/>
    </ligand>
</feature>
<feature type="binding site" evidence="3">
    <location>
        <begin position="61"/>
        <end position="65"/>
    </location>
    <ligand>
        <name>GTP</name>
        <dbReference type="ChEBI" id="CHEBI:37565"/>
    </ligand>
</feature>
<feature type="binding site" evidence="2">
    <location>
        <begin position="119"/>
        <end position="122"/>
    </location>
    <ligand>
        <name>GTP</name>
        <dbReference type="ChEBI" id="CHEBI:37565"/>
    </ligand>
</feature>
<feature type="binding site" evidence="2">
    <location>
        <begin position="149"/>
        <end position="151"/>
    </location>
    <ligand>
        <name>GTP</name>
        <dbReference type="ChEBI" id="CHEBI:37565"/>
    </ligand>
</feature>
<feature type="lipid moiety-binding region" description="S-geranylgeranyl cysteine" evidence="1">
    <location>
        <position position="211"/>
    </location>
</feature>
<feature type="lipid moiety-binding region" description="S-geranylgeranyl cysteine" evidence="1">
    <location>
        <position position="212"/>
    </location>
</feature>
<name>RAB2_LYMST</name>
<comment type="function">
    <text evidence="1">Required for protein transport from the endoplasmic reticulum to the Golgi complex.</text>
</comment>
<comment type="subcellular location">
    <subcellularLocation>
        <location evidence="1">Endoplasmic reticulum-Golgi intermediate compartment membrane</location>
        <topology evidence="1">Lipid-anchor</topology>
    </subcellularLocation>
    <subcellularLocation>
        <location evidence="1">Endoplasmic reticulum membrane</location>
        <topology evidence="1">Lipid-anchor</topology>
    </subcellularLocation>
    <subcellularLocation>
        <location evidence="1">Golgi apparatus membrane</location>
        <topology evidence="1">Lipid-anchor</topology>
    </subcellularLocation>
</comment>
<comment type="similarity">
    <text evidence="5">Belongs to the small GTPase superfamily. Rab family.</text>
</comment>